<organism>
    <name type="scientific">Escherichia phage lambda</name>
    <name type="common">Bacteriophage lambda</name>
    <dbReference type="NCBI Taxonomy" id="2681611"/>
    <lineage>
        <taxon>Viruses</taxon>
        <taxon>Duplodnaviria</taxon>
        <taxon>Heunggongvirae</taxon>
        <taxon>Uroviricota</taxon>
        <taxon>Caudoviricetes</taxon>
        <taxon>Lambdavirus</taxon>
        <taxon>Lambdavirus lambda</taxon>
    </lineage>
</organism>
<keyword id="KW-1185">Reference proteome</keyword>
<proteinExistence type="predicted"/>
<reference key="1">
    <citation type="journal article" date="1982" name="J. Mol. Biol.">
        <title>Nucleotide sequence of bacteriophage lambda DNA.</title>
        <authorList>
            <person name="Sanger F."/>
            <person name="Coulson A.R."/>
            <person name="Hong G.F."/>
            <person name="Hill D.F."/>
            <person name="Petersen G.B."/>
        </authorList>
    </citation>
    <scope>NUCLEOTIDE SEQUENCE [LARGE SCALE GENOMIC DNA]</scope>
</reference>
<feature type="chain" id="PRO_0000077720" description="Putative uncharacterized protein ORF64">
    <location>
        <begin position="1"/>
        <end position="64"/>
    </location>
</feature>
<protein>
    <recommendedName>
        <fullName>Putative uncharacterized protein ORF64</fullName>
    </recommendedName>
</protein>
<sequence length="64" mass="7083">MKRGGAYYRFRLVGHFDVSSGTPTIAGREVCKMQSRNSSQVIVRACITVSGFFISAQQVRALSR</sequence>
<name>Y64_LAMBD</name>
<accession>P03773</accession>
<dbReference type="EMBL" id="J02459">
    <property type="protein sequence ID" value="AAA96596.1"/>
    <property type="molecule type" value="Genomic_DNA"/>
</dbReference>
<dbReference type="PIR" id="H43011">
    <property type="entry name" value="Q1BP2L"/>
</dbReference>
<dbReference type="RefSeq" id="NP_040643.1">
    <property type="nucleotide sequence ID" value="NC_001416.1"/>
</dbReference>
<dbReference type="IntAct" id="P03773">
    <property type="interactions" value="1"/>
</dbReference>
<dbReference type="GeneID" id="2703478"/>
<dbReference type="KEGG" id="vg:2703478"/>
<dbReference type="Proteomes" id="UP000001711">
    <property type="component" value="Genome"/>
</dbReference>
<organismHost>
    <name type="scientific">Escherichia coli</name>
    <dbReference type="NCBI Taxonomy" id="562"/>
</organismHost>